<feature type="chain" id="PRO_1000114640" description="Nucleoid-associated protein YbaB">
    <location>
        <begin position="1"/>
        <end position="109"/>
    </location>
</feature>
<reference key="1">
    <citation type="journal article" date="2011" name="J. Bacteriol.">
        <title>Comparative genomics of 28 Salmonella enterica isolates: evidence for CRISPR-mediated adaptive sublineage evolution.</title>
        <authorList>
            <person name="Fricke W.F."/>
            <person name="Mammel M.K."/>
            <person name="McDermott P.F."/>
            <person name="Tartera C."/>
            <person name="White D.G."/>
            <person name="Leclerc J.E."/>
            <person name="Ravel J."/>
            <person name="Cebula T.A."/>
        </authorList>
    </citation>
    <scope>NUCLEOTIDE SEQUENCE [LARGE SCALE GENOMIC DNA]</scope>
    <source>
        <strain>SL483</strain>
    </source>
</reference>
<proteinExistence type="inferred from homology"/>
<gene>
    <name evidence="1" type="primary">ybaB</name>
    <name type="ordered locus">SeAg_B0530</name>
</gene>
<protein>
    <recommendedName>
        <fullName evidence="1">Nucleoid-associated protein YbaB</fullName>
    </recommendedName>
</protein>
<dbReference type="EMBL" id="CP001138">
    <property type="protein sequence ID" value="ACH49940.1"/>
    <property type="molecule type" value="Genomic_DNA"/>
</dbReference>
<dbReference type="RefSeq" id="WP_000467098.1">
    <property type="nucleotide sequence ID" value="NC_011149.1"/>
</dbReference>
<dbReference type="SMR" id="B5EXM7"/>
<dbReference type="KEGG" id="sea:SeAg_B0530"/>
<dbReference type="HOGENOM" id="CLU_140930_0_0_6"/>
<dbReference type="Proteomes" id="UP000008819">
    <property type="component" value="Chromosome"/>
</dbReference>
<dbReference type="GO" id="GO:0043590">
    <property type="term" value="C:bacterial nucleoid"/>
    <property type="evidence" value="ECO:0007669"/>
    <property type="project" value="UniProtKB-UniRule"/>
</dbReference>
<dbReference type="GO" id="GO:0005829">
    <property type="term" value="C:cytosol"/>
    <property type="evidence" value="ECO:0007669"/>
    <property type="project" value="TreeGrafter"/>
</dbReference>
<dbReference type="GO" id="GO:0003677">
    <property type="term" value="F:DNA binding"/>
    <property type="evidence" value="ECO:0007669"/>
    <property type="project" value="UniProtKB-UniRule"/>
</dbReference>
<dbReference type="FunFam" id="3.30.1310.10:FF:000001">
    <property type="entry name" value="Nucleoid-associated protein YbaB"/>
    <property type="match status" value="1"/>
</dbReference>
<dbReference type="Gene3D" id="3.30.1310.10">
    <property type="entry name" value="Nucleoid-associated protein YbaB-like domain"/>
    <property type="match status" value="1"/>
</dbReference>
<dbReference type="HAMAP" id="MF_00274">
    <property type="entry name" value="DNA_YbaB_EbfC"/>
    <property type="match status" value="1"/>
</dbReference>
<dbReference type="InterPro" id="IPR036894">
    <property type="entry name" value="YbaB-like_sf"/>
</dbReference>
<dbReference type="InterPro" id="IPR004401">
    <property type="entry name" value="YbaB/EbfC"/>
</dbReference>
<dbReference type="NCBIfam" id="TIGR00103">
    <property type="entry name" value="DNA_YbaB_EbfC"/>
    <property type="match status" value="1"/>
</dbReference>
<dbReference type="PANTHER" id="PTHR33449">
    <property type="entry name" value="NUCLEOID-ASSOCIATED PROTEIN YBAB"/>
    <property type="match status" value="1"/>
</dbReference>
<dbReference type="PANTHER" id="PTHR33449:SF1">
    <property type="entry name" value="NUCLEOID-ASSOCIATED PROTEIN YBAB"/>
    <property type="match status" value="1"/>
</dbReference>
<dbReference type="Pfam" id="PF02575">
    <property type="entry name" value="YbaB_DNA_bd"/>
    <property type="match status" value="1"/>
</dbReference>
<dbReference type="PIRSF" id="PIRSF004555">
    <property type="entry name" value="UCP004555"/>
    <property type="match status" value="1"/>
</dbReference>
<dbReference type="SUPFAM" id="SSF82607">
    <property type="entry name" value="YbaB-like"/>
    <property type="match status" value="1"/>
</dbReference>
<accession>B5EXM7</accession>
<evidence type="ECO:0000255" key="1">
    <source>
        <dbReference type="HAMAP-Rule" id="MF_00274"/>
    </source>
</evidence>
<keyword id="KW-0963">Cytoplasm</keyword>
<keyword id="KW-0238">DNA-binding</keyword>
<sequence length="109" mass="12015">MFGKGGLGNLMKQAQQMQEKMQKMQEEIAQLEVTGESGAGLVKVTINGAHNCRRVEIDPSLLEDDKEMLEDLVAAAFNDAARRIEETQKEKMASVSSGMQLPPGFKMPF</sequence>
<organism>
    <name type="scientific">Salmonella agona (strain SL483)</name>
    <dbReference type="NCBI Taxonomy" id="454166"/>
    <lineage>
        <taxon>Bacteria</taxon>
        <taxon>Pseudomonadati</taxon>
        <taxon>Pseudomonadota</taxon>
        <taxon>Gammaproteobacteria</taxon>
        <taxon>Enterobacterales</taxon>
        <taxon>Enterobacteriaceae</taxon>
        <taxon>Salmonella</taxon>
    </lineage>
</organism>
<comment type="function">
    <text evidence="1">Binds to DNA and alters its conformation. May be involved in regulation of gene expression, nucleoid organization and DNA protection.</text>
</comment>
<comment type="subunit">
    <text evidence="1">Homodimer.</text>
</comment>
<comment type="subcellular location">
    <subcellularLocation>
        <location evidence="1">Cytoplasm</location>
        <location evidence="1">Nucleoid</location>
    </subcellularLocation>
</comment>
<comment type="similarity">
    <text evidence="1">Belongs to the YbaB/EbfC family.</text>
</comment>
<name>YBAB_SALA4</name>